<reference key="1">
    <citation type="journal article" date="2007" name="Mol. Phylogenet. Evol.">
        <title>Phylogenetic and evolutionary implications of complete chloroplast genome sequences of four early-diverging angiosperms: Buxus (Buxaceae), Chloranthus (Chloranthaceae), Dioscorea (Dioscoreaceae), and Illicium (Schisandraceae).</title>
        <authorList>
            <person name="Hansen D.R."/>
            <person name="Dastidar S.G."/>
            <person name="Cai Z."/>
            <person name="Penaflor C."/>
            <person name="Kuehl J.V."/>
            <person name="Boore J.L."/>
            <person name="Jansen R.K."/>
        </authorList>
    </citation>
    <scope>NUCLEOTIDE SEQUENCE [LARGE SCALE GENOMIC DNA]</scope>
</reference>
<evidence type="ECO:0000255" key="1">
    <source>
        <dbReference type="HAMAP-Rule" id="MF_01324"/>
    </source>
</evidence>
<accession>A6MMT4</accession>
<feature type="chain" id="PRO_0000353564" description="DNA-directed RNA polymerase subunit beta''">
    <location>
        <begin position="1"/>
        <end position="1385"/>
    </location>
</feature>
<feature type="binding site" evidence="1">
    <location>
        <position position="224"/>
    </location>
    <ligand>
        <name>Zn(2+)</name>
        <dbReference type="ChEBI" id="CHEBI:29105"/>
    </ligand>
</feature>
<feature type="binding site" evidence="1">
    <location>
        <position position="294"/>
    </location>
    <ligand>
        <name>Zn(2+)</name>
        <dbReference type="ChEBI" id="CHEBI:29105"/>
    </ligand>
</feature>
<feature type="binding site" evidence="1">
    <location>
        <position position="301"/>
    </location>
    <ligand>
        <name>Zn(2+)</name>
        <dbReference type="ChEBI" id="CHEBI:29105"/>
    </ligand>
</feature>
<feature type="binding site" evidence="1">
    <location>
        <position position="304"/>
    </location>
    <ligand>
        <name>Zn(2+)</name>
        <dbReference type="ChEBI" id="CHEBI:29105"/>
    </ligand>
</feature>
<sequence length="1385" mass="157076">MEVLMAERANLVFHNKVIDGTAMKRLISRLIDHFGMAYTSHILDQVKTLGFQQATATSISLGIDDLLTISSKGWLVQDAEQQSLLLEKHHRYGNVHAVEKLRQSIEIWYATSEYLRQEMNPNFRMTDPSNPVHIMSFSGARGNVSQVHQLVGMRGLMSDPQGQMIDLPIQSNLREGLSLTEYTISCYGARKGVVDTAVRTSDAGYLTRRLVEVVQHVVVRRTDCGTIRGISISIRNGMTGRILIQTLIGRVLADDVYMGLRCIAARNQDIGIGLVNRFITSRAQPIYIRTPFTCRSTSWICRLCYGRSPTHGDLVELGEAVGIIAGQSIGEPGTQLTLRTFHTGGVFTGGTAEHVRAPFNGKIKFNEDLVHPTRTRHGHPAFLCYIDLYVTIESQDILHNVNIPPKSFILVQNDQYVESEQVIAEIRARTSTFSFKEKVRKHIYSDSEGEIHWSTDVYHVPEYTHGNVHLLPKTTHLWILSGGPGPCRRSIVPFSLHKDQDQMNLQSLSVEQRYISNLSVNNDRVRHKLFDLDPFWKKKGGVGYSGPDRILSNGHWDFIYPAILHENSNLLAKRRRNRFIISFQHDQEREKKLPPRSGIKIEIPINGILRRNSILAYFDDPRYRRSSSGITKYGTIEVDSIVKKDDLIEYRGAKELRPKYQMKVDPFFFIPEEVHILPGSSPIMVRNNSIIGVDTRITLNTRSRIGGLVRVERKKKRIELKIFSGDIHFPGETDKISRHSGILIPPETRKKNSKESKSKQLKNWIYVQRITPIKKKYFVSVRAVVIYEIADGIHLATLFPQDLLQERDNLQLRVVNYFLYGNGKPIRGISHKSIQLVRTCLVLNWDQDQNGSIEEVYASFVKVRANDLIRDFIRIDLVKSPISKRNDTAGSGLIPVNGSDRTNINPFCSKARIQSLSQHQGTVRTFLNRNKEGESFLVLSSSNCSRIGPFNGLKYHNLTKKESIQIKEDPMIPIRNSLGPFGTVPKIANFYSSYQLITHNEILLNKYLLLDNPKQTFEALKYYFMDENGIIYNPDPCSNIILNPFDSNWYFPHQDYCEETCTIISLGQFICENVCISKHGPRIKSGQVLIVHVDSLVIRSAKPHLATPGATVHGHYGEILYEGNTLVTFIYEKSRSGDITQGLPKVEQVLEVRSIDSISMNLEKRFEGWGERMTGILGIPWGFLIGAELTIAQSHFSLVNKIQRVYRSQGVQIHNRHIEIIVRQITSKVLVSEDGMSNVFSPGELIGLLRAERTGRALEEAICYRAVLLGITRASLNTQSFISEASFQETTRVLAKAALRGRIDWLKGLKENVVLGGMIPVGTGFKGLVHHSREHNNIPFEIQKKSRFEGEMRDILFPHRELFCSCLETNFHDTSEQSFMGLNDS</sequence>
<proteinExistence type="inferred from homology"/>
<comment type="function">
    <text evidence="1">DNA-dependent RNA polymerase catalyzes the transcription of DNA into RNA using the four ribonucleoside triphosphates as substrates.</text>
</comment>
<comment type="catalytic activity">
    <reaction evidence="1">
        <text>RNA(n) + a ribonucleoside 5'-triphosphate = RNA(n+1) + diphosphate</text>
        <dbReference type="Rhea" id="RHEA:21248"/>
        <dbReference type="Rhea" id="RHEA-COMP:14527"/>
        <dbReference type="Rhea" id="RHEA-COMP:17342"/>
        <dbReference type="ChEBI" id="CHEBI:33019"/>
        <dbReference type="ChEBI" id="CHEBI:61557"/>
        <dbReference type="ChEBI" id="CHEBI:140395"/>
        <dbReference type="EC" id="2.7.7.6"/>
    </reaction>
</comment>
<comment type="cofactor">
    <cofactor evidence="1">
        <name>Zn(2+)</name>
        <dbReference type="ChEBI" id="CHEBI:29105"/>
    </cofactor>
    <text evidence="1">Binds 1 Zn(2+) ion per subunit.</text>
</comment>
<comment type="subunit">
    <text evidence="1">In plastids the minimal PEP RNA polymerase catalytic core is composed of four subunits: alpha, beta, beta', and beta''. When a (nuclear-encoded) sigma factor is associated with the core the holoenzyme is formed, which can initiate transcription.</text>
</comment>
<comment type="subcellular location">
    <subcellularLocation>
        <location evidence="1">Plastid</location>
        <location evidence="1">Chloroplast</location>
    </subcellularLocation>
</comment>
<comment type="similarity">
    <text evidence="1">Belongs to the RNA polymerase beta' chain family. RpoC2 subfamily.</text>
</comment>
<organism>
    <name type="scientific">Illicium oligandrum</name>
    <name type="common">Star anise</name>
    <dbReference type="NCBI Taxonomy" id="145286"/>
    <lineage>
        <taxon>Eukaryota</taxon>
        <taxon>Viridiplantae</taxon>
        <taxon>Streptophyta</taxon>
        <taxon>Embryophyta</taxon>
        <taxon>Tracheophyta</taxon>
        <taxon>Spermatophyta</taxon>
        <taxon>Magnoliopsida</taxon>
        <taxon>Austrobaileyales</taxon>
        <taxon>Schisandraceae</taxon>
        <taxon>Illicium</taxon>
    </lineage>
</organism>
<name>RPOC2_ILLOL</name>
<geneLocation type="chloroplast"/>
<protein>
    <recommendedName>
        <fullName evidence="1">DNA-directed RNA polymerase subunit beta''</fullName>
        <ecNumber evidence="1">2.7.7.6</ecNumber>
    </recommendedName>
    <alternativeName>
        <fullName evidence="1">PEP</fullName>
    </alternativeName>
    <alternativeName>
        <fullName evidence="1">Plastid-encoded RNA polymerase subunit beta''</fullName>
        <shortName evidence="1">RNA polymerase subunit beta''</shortName>
    </alternativeName>
</protein>
<gene>
    <name evidence="1" type="primary">rpoC2</name>
</gene>
<keyword id="KW-0150">Chloroplast</keyword>
<keyword id="KW-0240">DNA-directed RNA polymerase</keyword>
<keyword id="KW-0479">Metal-binding</keyword>
<keyword id="KW-0548">Nucleotidyltransferase</keyword>
<keyword id="KW-0934">Plastid</keyword>
<keyword id="KW-0804">Transcription</keyword>
<keyword id="KW-0808">Transferase</keyword>
<keyword id="KW-0862">Zinc</keyword>
<dbReference type="EC" id="2.7.7.6" evidence="1"/>
<dbReference type="EMBL" id="EF380354">
    <property type="protein sequence ID" value="ABQ52509.1"/>
    <property type="molecule type" value="Genomic_DNA"/>
</dbReference>
<dbReference type="RefSeq" id="YP_001294260.1">
    <property type="nucleotide sequence ID" value="NC_009600.1"/>
</dbReference>
<dbReference type="SMR" id="A6MMT4"/>
<dbReference type="GeneID" id="5236773"/>
<dbReference type="GO" id="GO:0009507">
    <property type="term" value="C:chloroplast"/>
    <property type="evidence" value="ECO:0007669"/>
    <property type="project" value="UniProtKB-SubCell"/>
</dbReference>
<dbReference type="GO" id="GO:0000428">
    <property type="term" value="C:DNA-directed RNA polymerase complex"/>
    <property type="evidence" value="ECO:0007669"/>
    <property type="project" value="UniProtKB-KW"/>
</dbReference>
<dbReference type="GO" id="GO:0005739">
    <property type="term" value="C:mitochondrion"/>
    <property type="evidence" value="ECO:0007669"/>
    <property type="project" value="GOC"/>
</dbReference>
<dbReference type="GO" id="GO:0003677">
    <property type="term" value="F:DNA binding"/>
    <property type="evidence" value="ECO:0007669"/>
    <property type="project" value="UniProtKB-UniRule"/>
</dbReference>
<dbReference type="GO" id="GO:0003899">
    <property type="term" value="F:DNA-directed RNA polymerase activity"/>
    <property type="evidence" value="ECO:0007669"/>
    <property type="project" value="UniProtKB-UniRule"/>
</dbReference>
<dbReference type="GO" id="GO:0008270">
    <property type="term" value="F:zinc ion binding"/>
    <property type="evidence" value="ECO:0007669"/>
    <property type="project" value="UniProtKB-UniRule"/>
</dbReference>
<dbReference type="GO" id="GO:0006351">
    <property type="term" value="P:DNA-templated transcription"/>
    <property type="evidence" value="ECO:0007669"/>
    <property type="project" value="UniProtKB-UniRule"/>
</dbReference>
<dbReference type="CDD" id="cd02655">
    <property type="entry name" value="RNAP_beta'_C"/>
    <property type="match status" value="1"/>
</dbReference>
<dbReference type="FunFam" id="1.10.132.30:FF:000002">
    <property type="entry name" value="DNA-directed RNA polymerase subunit beta"/>
    <property type="match status" value="1"/>
</dbReference>
<dbReference type="FunFam" id="1.10.274.100:FF:000011">
    <property type="entry name" value="DNA-directed RNA polymerase subunit beta"/>
    <property type="match status" value="1"/>
</dbReference>
<dbReference type="Gene3D" id="1.10.132.30">
    <property type="match status" value="1"/>
</dbReference>
<dbReference type="Gene3D" id="1.10.150.390">
    <property type="match status" value="1"/>
</dbReference>
<dbReference type="Gene3D" id="1.10.1790.20">
    <property type="match status" value="1"/>
</dbReference>
<dbReference type="Gene3D" id="1.10.274.100">
    <property type="entry name" value="RNA polymerase Rpb1, domain 3"/>
    <property type="match status" value="1"/>
</dbReference>
<dbReference type="HAMAP" id="MF_01324">
    <property type="entry name" value="RNApol_bact_RpoC2"/>
    <property type="match status" value="1"/>
</dbReference>
<dbReference type="InterPro" id="IPR012756">
    <property type="entry name" value="DNA-dir_RpoC2_beta_pp"/>
</dbReference>
<dbReference type="InterPro" id="IPR050254">
    <property type="entry name" value="RNA_pol_beta''_euk"/>
</dbReference>
<dbReference type="InterPro" id="IPR042102">
    <property type="entry name" value="RNA_pol_Rpb1_3_sf"/>
</dbReference>
<dbReference type="InterPro" id="IPR007083">
    <property type="entry name" value="RNA_pol_Rpb1_4"/>
</dbReference>
<dbReference type="InterPro" id="IPR007081">
    <property type="entry name" value="RNA_pol_Rpb1_5"/>
</dbReference>
<dbReference type="InterPro" id="IPR038120">
    <property type="entry name" value="Rpb1_funnel_sf"/>
</dbReference>
<dbReference type="NCBIfam" id="TIGR02388">
    <property type="entry name" value="rpoC2_cyan"/>
    <property type="match status" value="1"/>
</dbReference>
<dbReference type="PANTHER" id="PTHR34995">
    <property type="entry name" value="DNA-DIRECTED RNA POLYMERASE SUBUNIT BETA"/>
    <property type="match status" value="1"/>
</dbReference>
<dbReference type="PANTHER" id="PTHR34995:SF1">
    <property type="entry name" value="DNA-DIRECTED RNA POLYMERASE SUBUNIT BETA"/>
    <property type="match status" value="1"/>
</dbReference>
<dbReference type="Pfam" id="PF05000">
    <property type="entry name" value="RNA_pol_Rpb1_4"/>
    <property type="match status" value="1"/>
</dbReference>
<dbReference type="Pfam" id="PF04998">
    <property type="entry name" value="RNA_pol_Rpb1_5"/>
    <property type="match status" value="2"/>
</dbReference>
<dbReference type="SUPFAM" id="SSF64484">
    <property type="entry name" value="beta and beta-prime subunits of DNA dependent RNA-polymerase"/>
    <property type="match status" value="1"/>
</dbReference>